<feature type="chain" id="PRO_0000368320" description="ATP synthase subunit b 1">
    <location>
        <begin position="1"/>
        <end position="164"/>
    </location>
</feature>
<feature type="transmembrane region" description="Helical" evidence="1">
    <location>
        <begin position="4"/>
        <end position="24"/>
    </location>
</feature>
<reference key="1">
    <citation type="submission" date="2007-04" db="EMBL/GenBank/DDBJ databases">
        <title>Complete genome sequence of the nitrogen-fixing bacterium Azorhizobium caulinodans ORS571.</title>
        <authorList>
            <person name="Lee K.B."/>
            <person name="Backer P.D."/>
            <person name="Aono T."/>
            <person name="Liu C.T."/>
            <person name="Suzuki S."/>
            <person name="Suzuki T."/>
            <person name="Kaneko T."/>
            <person name="Yamada M."/>
            <person name="Tabata S."/>
            <person name="Kupfer D.M."/>
            <person name="Najar F.Z."/>
            <person name="Wiley G.B."/>
            <person name="Roe B."/>
            <person name="Binnewies T."/>
            <person name="Ussery D."/>
            <person name="Vereecke D."/>
            <person name="Gevers D."/>
            <person name="Holsters M."/>
            <person name="Oyaizu H."/>
        </authorList>
    </citation>
    <scope>NUCLEOTIDE SEQUENCE [LARGE SCALE GENOMIC DNA]</scope>
    <source>
        <strain>ATCC 43989 / DSM 5975 / JCM 20966 / LMG 6465 / NBRC 14845 / NCIMB 13405 / ORS 571</strain>
    </source>
</reference>
<comment type="function">
    <text evidence="1">F(1)F(0) ATP synthase produces ATP from ADP in the presence of a proton or sodium gradient. F-type ATPases consist of two structural domains, F(1) containing the extramembraneous catalytic core and F(0) containing the membrane proton channel, linked together by a central stalk and a peripheral stalk. During catalysis, ATP synthesis in the catalytic domain of F(1) is coupled via a rotary mechanism of the central stalk subunits to proton translocation.</text>
</comment>
<comment type="function">
    <text evidence="1">Component of the F(0) channel, it forms part of the peripheral stalk, linking F(1) to F(0).</text>
</comment>
<comment type="subunit">
    <text evidence="1">F-type ATPases have 2 components, F(1) - the catalytic core - and F(0) - the membrane proton channel. F(1) has five subunits: alpha(3), beta(3), gamma(1), delta(1), epsilon(1). F(0) has three main subunits: a(1), b(2) and c(10-14). The alpha and beta chains form an alternating ring which encloses part of the gamma chain. F(1) is attached to F(0) by a central stalk formed by the gamma and epsilon chains, while a peripheral stalk is formed by the delta and b chains.</text>
</comment>
<comment type="subcellular location">
    <subcellularLocation>
        <location evidence="1">Cell inner membrane</location>
        <topology evidence="1">Single-pass membrane protein</topology>
    </subcellularLocation>
</comment>
<comment type="similarity">
    <text evidence="1">Belongs to the ATPase B chain family.</text>
</comment>
<evidence type="ECO:0000255" key="1">
    <source>
        <dbReference type="HAMAP-Rule" id="MF_01398"/>
    </source>
</evidence>
<organism>
    <name type="scientific">Azorhizobium caulinodans (strain ATCC 43989 / DSM 5975 / JCM 20966 / LMG 6465 / NBRC 14845 / NCIMB 13405 / ORS 571)</name>
    <dbReference type="NCBI Taxonomy" id="438753"/>
    <lineage>
        <taxon>Bacteria</taxon>
        <taxon>Pseudomonadati</taxon>
        <taxon>Pseudomonadota</taxon>
        <taxon>Alphaproteobacteria</taxon>
        <taxon>Hyphomicrobiales</taxon>
        <taxon>Xanthobacteraceae</taxon>
        <taxon>Azorhizobium</taxon>
    </lineage>
</organism>
<protein>
    <recommendedName>
        <fullName evidence="1">ATP synthase subunit b 1</fullName>
    </recommendedName>
    <alternativeName>
        <fullName evidence="1">ATP synthase F(0) sector subunit b 1</fullName>
    </alternativeName>
    <alternativeName>
        <fullName evidence="1">ATPase subunit I 1</fullName>
    </alternativeName>
    <alternativeName>
        <fullName evidence="1">F-type ATPase subunit b 1</fullName>
        <shortName evidence="1">F-ATPase subunit b 1</shortName>
    </alternativeName>
</protein>
<keyword id="KW-0066">ATP synthesis</keyword>
<keyword id="KW-0997">Cell inner membrane</keyword>
<keyword id="KW-1003">Cell membrane</keyword>
<keyword id="KW-0138">CF(0)</keyword>
<keyword id="KW-0375">Hydrogen ion transport</keyword>
<keyword id="KW-0406">Ion transport</keyword>
<keyword id="KW-0472">Membrane</keyword>
<keyword id="KW-1185">Reference proteome</keyword>
<keyword id="KW-0812">Transmembrane</keyword>
<keyword id="KW-1133">Transmembrane helix</keyword>
<keyword id="KW-0813">Transport</keyword>
<accession>A8HT73</accession>
<name>ATPF1_AZOC5</name>
<proteinExistence type="inferred from homology"/>
<gene>
    <name evidence="1" type="primary">atpF1</name>
    <name type="ordered locus">AZC_4263</name>
</gene>
<sequence>MSDMELAELWVAVAFFVFVGILLYNGVHKALAKALDARGARIAAELDEARRLKEEAQKLVAEYKRKQREAEAEAEAIVTAAKAEAERLAAETKAKLEEFVSRRTRMAEDKIAQAEHQALADVKAFAADAAVQAAERILAASVPGTATGDRLLGQAIQDVRGKLN</sequence>
<dbReference type="EMBL" id="AP009384">
    <property type="protein sequence ID" value="BAF90261.1"/>
    <property type="molecule type" value="Genomic_DNA"/>
</dbReference>
<dbReference type="SMR" id="A8HT73"/>
<dbReference type="STRING" id="438753.AZC_4263"/>
<dbReference type="KEGG" id="azc:AZC_4263"/>
<dbReference type="eggNOG" id="COG0711">
    <property type="taxonomic scope" value="Bacteria"/>
</dbReference>
<dbReference type="HOGENOM" id="CLU_079215_6_1_5"/>
<dbReference type="Proteomes" id="UP000000270">
    <property type="component" value="Chromosome"/>
</dbReference>
<dbReference type="GO" id="GO:0005886">
    <property type="term" value="C:plasma membrane"/>
    <property type="evidence" value="ECO:0007669"/>
    <property type="project" value="UniProtKB-SubCell"/>
</dbReference>
<dbReference type="GO" id="GO:0045259">
    <property type="term" value="C:proton-transporting ATP synthase complex"/>
    <property type="evidence" value="ECO:0007669"/>
    <property type="project" value="UniProtKB-KW"/>
</dbReference>
<dbReference type="GO" id="GO:0046933">
    <property type="term" value="F:proton-transporting ATP synthase activity, rotational mechanism"/>
    <property type="evidence" value="ECO:0007669"/>
    <property type="project" value="UniProtKB-UniRule"/>
</dbReference>
<dbReference type="GO" id="GO:0046961">
    <property type="term" value="F:proton-transporting ATPase activity, rotational mechanism"/>
    <property type="evidence" value="ECO:0007669"/>
    <property type="project" value="TreeGrafter"/>
</dbReference>
<dbReference type="CDD" id="cd06503">
    <property type="entry name" value="ATP-synt_Fo_b"/>
    <property type="match status" value="1"/>
</dbReference>
<dbReference type="HAMAP" id="MF_01398">
    <property type="entry name" value="ATP_synth_b_bprime"/>
    <property type="match status" value="1"/>
</dbReference>
<dbReference type="InterPro" id="IPR002146">
    <property type="entry name" value="ATP_synth_b/b'su_bac/chlpt"/>
</dbReference>
<dbReference type="InterPro" id="IPR050059">
    <property type="entry name" value="ATP_synthase_B_chain"/>
</dbReference>
<dbReference type="PANTHER" id="PTHR33445:SF1">
    <property type="entry name" value="ATP SYNTHASE SUBUNIT B"/>
    <property type="match status" value="1"/>
</dbReference>
<dbReference type="PANTHER" id="PTHR33445">
    <property type="entry name" value="ATP SYNTHASE SUBUNIT B', CHLOROPLASTIC"/>
    <property type="match status" value="1"/>
</dbReference>
<dbReference type="Pfam" id="PF00430">
    <property type="entry name" value="ATP-synt_B"/>
    <property type="match status" value="1"/>
</dbReference>